<gene>
    <name type="primary">asr</name>
</gene>
<protein>
    <recommendedName>
        <fullName>Acid shock protein</fullName>
    </recommendedName>
</protein>
<feature type="signal peptide" evidence="1">
    <location>
        <begin position="1"/>
        <end position="21"/>
    </location>
</feature>
<feature type="propeptide" id="PRO_0000269507" evidence="1">
    <location>
        <begin position="22"/>
        <end position="80"/>
    </location>
</feature>
<feature type="chain" id="PRO_0000002406" description="Acid shock protein">
    <location>
        <begin position="81"/>
        <end position="139"/>
    </location>
</feature>
<feature type="region of interest" description="Disordered" evidence="2">
    <location>
        <begin position="27"/>
        <end position="139"/>
    </location>
</feature>
<feature type="compositionally biased region" description="Low complexity" evidence="2">
    <location>
        <begin position="27"/>
        <end position="40"/>
    </location>
</feature>
<feature type="compositionally biased region" description="Basic residues" evidence="2">
    <location>
        <begin position="41"/>
        <end position="51"/>
    </location>
</feature>
<feature type="compositionally biased region" description="Low complexity" evidence="2">
    <location>
        <begin position="52"/>
        <end position="61"/>
    </location>
</feature>
<feature type="compositionally biased region" description="Low complexity" evidence="2">
    <location>
        <begin position="90"/>
        <end position="99"/>
    </location>
</feature>
<feature type="compositionally biased region" description="Basic residues" evidence="2">
    <location>
        <begin position="118"/>
        <end position="130"/>
    </location>
</feature>
<organism>
    <name type="scientific">Klebsiella pneumoniae</name>
    <dbReference type="NCBI Taxonomy" id="573"/>
    <lineage>
        <taxon>Bacteria</taxon>
        <taxon>Pseudomonadati</taxon>
        <taxon>Pseudomonadota</taxon>
        <taxon>Gammaproteobacteria</taxon>
        <taxon>Enterobacterales</taxon>
        <taxon>Enterobacteriaceae</taxon>
        <taxon>Klebsiella/Raoultella group</taxon>
        <taxon>Klebsiella</taxon>
        <taxon>Klebsiella pneumoniae complex</taxon>
    </lineage>
</organism>
<reference key="1">
    <citation type="journal article" date="2003" name="J. Bacteriol.">
        <title>Molecular characterization of the acid-inducible asr gene of Escherichia coli and its role in acid stress response.</title>
        <authorList>
            <person name="Seputiene V."/>
            <person name="Motiejunas D."/>
            <person name="Suziedelis K."/>
            <person name="Tomenius H."/>
            <person name="Normark S."/>
            <person name="Melefors O."/>
            <person name="Suziedeliene E."/>
        </authorList>
    </citation>
    <scope>NUCLEOTIDE SEQUENCE [GENOMIC DNA]</scope>
    <source>
        <strain>ATCC 13883 / DSM 30104 / JCM 1662 / NBRC 14940 / NCIMB 13281 / NCTC 9633</strain>
    </source>
</reference>
<proteinExistence type="inferred from homology"/>
<keyword id="KW-0574">Periplasm</keyword>
<keyword id="KW-0732">Signal</keyword>
<sequence length="139" mass="14183">MKKVLALVVAAAMGLSSAAFAADAVSTTQAPAATHSTAAKTTHHKKHHKAAAKPAAEQKAQAAKKHKKAEAKPAAAQKAQAAKKHKKVAAKPAAPQKAQAAKKHHKAAAKPAAQKAQAAKKHHKTTKHQAAKPTAQPAA</sequence>
<accession>Q93MH5</accession>
<comment type="function">
    <text evidence="1">Required for growth and/or survival at acidic conditions.</text>
</comment>
<comment type="subcellular location">
    <subcellularLocation>
        <location evidence="1">Periplasm</location>
    </subcellularLocation>
</comment>
<comment type="PTM">
    <text evidence="1">Proteolytic processing gives rise to the active protein.</text>
</comment>
<comment type="similarity">
    <text evidence="3">Belongs to the Asr family.</text>
</comment>
<dbReference type="EMBL" id="AF405543">
    <property type="protein sequence ID" value="AAK92016.1"/>
    <property type="molecule type" value="Genomic_DNA"/>
</dbReference>
<dbReference type="RefSeq" id="WP_002903693.1">
    <property type="nucleotide sequence ID" value="NZ_WYAL01000007.1"/>
</dbReference>
<dbReference type="OMA" id="HVKKHHA"/>
<dbReference type="GO" id="GO:0042597">
    <property type="term" value="C:periplasmic space"/>
    <property type="evidence" value="ECO:0007669"/>
    <property type="project" value="UniProtKB-SubCell"/>
</dbReference>
<dbReference type="HAMAP" id="MF_00546">
    <property type="entry name" value="Asr"/>
    <property type="match status" value="1"/>
</dbReference>
<dbReference type="InterPro" id="IPR023497">
    <property type="entry name" value="Acid_shock"/>
</dbReference>
<dbReference type="NCBIfam" id="NF033636">
    <property type="entry name" value="acid_shock_Asr"/>
    <property type="match status" value="2"/>
</dbReference>
<dbReference type="Pfam" id="PF06392">
    <property type="entry name" value="Asr"/>
    <property type="match status" value="2"/>
</dbReference>
<name>ASR_KLEPN</name>
<evidence type="ECO:0000250" key="1"/>
<evidence type="ECO:0000256" key="2">
    <source>
        <dbReference type="SAM" id="MobiDB-lite"/>
    </source>
</evidence>
<evidence type="ECO:0000305" key="3"/>